<proteinExistence type="predicted"/>
<name>Y9144_DICDI</name>
<dbReference type="EMBL" id="AAFI02000019">
    <property type="protein sequence ID" value="EAL68813.1"/>
    <property type="molecule type" value="Genomic_DNA"/>
</dbReference>
<dbReference type="RefSeq" id="XP_642764.1">
    <property type="nucleotide sequence ID" value="XM_637672.1"/>
</dbReference>
<dbReference type="PaxDb" id="44689-DDB0169144"/>
<dbReference type="EnsemblProtists" id="EAL68813">
    <property type="protein sequence ID" value="EAL68813"/>
    <property type="gene ID" value="DDB_G0277255"/>
</dbReference>
<dbReference type="GeneID" id="8620953"/>
<dbReference type="KEGG" id="ddi:DDB_G0277255"/>
<dbReference type="dictyBase" id="DDB_G0277255"/>
<dbReference type="VEuPathDB" id="AmoebaDB:DDB_G0277255"/>
<dbReference type="eggNOG" id="ENOG502RCF0">
    <property type="taxonomic scope" value="Eukaryota"/>
</dbReference>
<dbReference type="HOGENOM" id="CLU_280119_0_0_1"/>
<dbReference type="InParanoid" id="Q86K40"/>
<dbReference type="OMA" id="TFYINYI"/>
<dbReference type="PRO" id="PR:Q86K40"/>
<dbReference type="Proteomes" id="UP000002195">
    <property type="component" value="Chromosome 2"/>
</dbReference>
<dbReference type="InterPro" id="IPR053019">
    <property type="entry name" value="GATA_zinc_finger"/>
</dbReference>
<dbReference type="PANTHER" id="PTHR23353:SF32">
    <property type="entry name" value="AAC-RICH MRNA CLONE AAC4 PROTEIN-RELATED"/>
    <property type="match status" value="1"/>
</dbReference>
<dbReference type="PANTHER" id="PTHR23353">
    <property type="entry name" value="RAB-GAP/TBC-RELATED"/>
    <property type="match status" value="1"/>
</dbReference>
<organism>
    <name type="scientific">Dictyostelium discoideum</name>
    <name type="common">Social amoeba</name>
    <dbReference type="NCBI Taxonomy" id="44689"/>
    <lineage>
        <taxon>Eukaryota</taxon>
        <taxon>Amoebozoa</taxon>
        <taxon>Evosea</taxon>
        <taxon>Eumycetozoa</taxon>
        <taxon>Dictyostelia</taxon>
        <taxon>Dictyosteliales</taxon>
        <taxon>Dictyosteliaceae</taxon>
        <taxon>Dictyostelium</taxon>
    </lineage>
</organism>
<protein>
    <recommendedName>
        <fullName>Putative uncharacterized protein DDB_G0277255</fullName>
    </recommendedName>
</protein>
<evidence type="ECO:0000256" key="1">
    <source>
        <dbReference type="SAM" id="MobiDB-lite"/>
    </source>
</evidence>
<feature type="chain" id="PRO_0000348176" description="Putative uncharacterized protein DDB_G0277255">
    <location>
        <begin position="1"/>
        <end position="1123"/>
    </location>
</feature>
<feature type="region of interest" description="Disordered" evidence="1">
    <location>
        <begin position="136"/>
        <end position="229"/>
    </location>
</feature>
<feature type="region of interest" description="Disordered" evidence="1">
    <location>
        <begin position="262"/>
        <end position="471"/>
    </location>
</feature>
<feature type="region of interest" description="Disordered" evidence="1">
    <location>
        <begin position="483"/>
        <end position="514"/>
    </location>
</feature>
<feature type="region of interest" description="Disordered" evidence="1">
    <location>
        <begin position="527"/>
        <end position="609"/>
    </location>
</feature>
<feature type="region of interest" description="Disordered" evidence="1">
    <location>
        <begin position="629"/>
        <end position="769"/>
    </location>
</feature>
<feature type="region of interest" description="Disordered" evidence="1">
    <location>
        <begin position="782"/>
        <end position="812"/>
    </location>
</feature>
<feature type="region of interest" description="Disordered" evidence="1">
    <location>
        <begin position="835"/>
        <end position="1005"/>
    </location>
</feature>
<feature type="region of interest" description="Disordered" evidence="1">
    <location>
        <begin position="1070"/>
        <end position="1099"/>
    </location>
</feature>
<feature type="compositionally biased region" description="Gly residues" evidence="1">
    <location>
        <begin position="166"/>
        <end position="185"/>
    </location>
</feature>
<feature type="compositionally biased region" description="Acidic residues" evidence="1">
    <location>
        <begin position="190"/>
        <end position="199"/>
    </location>
</feature>
<feature type="compositionally biased region" description="Gly residues" evidence="1">
    <location>
        <begin position="211"/>
        <end position="223"/>
    </location>
</feature>
<feature type="compositionally biased region" description="Low complexity" evidence="1">
    <location>
        <begin position="262"/>
        <end position="322"/>
    </location>
</feature>
<feature type="compositionally biased region" description="Polar residues" evidence="1">
    <location>
        <begin position="329"/>
        <end position="343"/>
    </location>
</feature>
<feature type="compositionally biased region" description="Low complexity" evidence="1">
    <location>
        <begin position="344"/>
        <end position="387"/>
    </location>
</feature>
<feature type="compositionally biased region" description="Low complexity" evidence="1">
    <location>
        <begin position="397"/>
        <end position="464"/>
    </location>
</feature>
<feature type="compositionally biased region" description="Low complexity" evidence="1">
    <location>
        <begin position="489"/>
        <end position="499"/>
    </location>
</feature>
<feature type="compositionally biased region" description="Low complexity" evidence="1">
    <location>
        <begin position="527"/>
        <end position="548"/>
    </location>
</feature>
<feature type="compositionally biased region" description="Low complexity" evidence="1">
    <location>
        <begin position="563"/>
        <end position="585"/>
    </location>
</feature>
<feature type="compositionally biased region" description="Polar residues" evidence="1">
    <location>
        <begin position="590"/>
        <end position="604"/>
    </location>
</feature>
<feature type="compositionally biased region" description="Basic and acidic residues" evidence="1">
    <location>
        <begin position="632"/>
        <end position="646"/>
    </location>
</feature>
<feature type="compositionally biased region" description="Low complexity" evidence="1">
    <location>
        <begin position="647"/>
        <end position="707"/>
    </location>
</feature>
<feature type="compositionally biased region" description="Low complexity" evidence="1">
    <location>
        <begin position="727"/>
        <end position="769"/>
    </location>
</feature>
<feature type="compositionally biased region" description="Polar residues" evidence="1">
    <location>
        <begin position="790"/>
        <end position="799"/>
    </location>
</feature>
<feature type="compositionally biased region" description="Low complexity" evidence="1">
    <location>
        <begin position="835"/>
        <end position="984"/>
    </location>
</feature>
<feature type="compositionally biased region" description="Low complexity" evidence="1">
    <location>
        <begin position="1070"/>
        <end position="1098"/>
    </location>
</feature>
<keyword id="KW-1185">Reference proteome</keyword>
<sequence>MTTILKGYYLKVTLENRIVKHNGRKVYLSIVEHGNGIPDHALILKTTAKCVKFSVCLSIRSQCGWKELDQNDSGELTFDLKVEVTGKSQRAPLFPLIFQLCEKNYDQVTLISKSVIPVKAITKIPKKSLRAELVPLGESPTKPPQAFPASPSDLISSKEYDDEFDGGNGGNSGTNGDGDDGGCSLGGLADENDYEDGMVIDENGNVCSSGSGDGGGGGGGGGDISPKLTSSLNNLKSSISNTSLSSLGNSLNNSLNGTNSQMLQYQQQQQQQQQQHGNLNVSGNNINNNRDTNVSGNNNNNNNSTTTTTTTTTTTTHSNNSNMGGSKKPLNNSNSNIHFLTNQQNSDTPLSNSSSSTPTLSPAQSAISSPTLSNIINSNSNSTSNLNDLIKDSSQPSTSTSTSTSSSSSSSSSSSSSSSSSSSSSSSSSSSSSSSSSSSSSSSSSSSSSSSSSSSSSSSSSSSSQPTLNQHSKYIPKSLHSSLSSIPINNKENNNNNNNRDNRDKDICTTSPNLNDSINNTLDLFNKKINSNNNNNNNNSNNNNNISSQERPLLNSPHVQLTHQQQQQQQQQQQQQQQQHQQQHQKIGMSKSSSELQVPSSNYHKQSDDLNPLDFLSAIATMGSNSLSSILCKDDSKTNTNKDKDNNNSNSNKDSSNNNNNNNNNNNNNNNNNNNNNNNNNNNNNNNNNNNNNNNNNNNNNNNINNNEDLLPNPGSSKFAKYSADQSVSSSSLNTPLSSPIVKSQSYQQPQSQSQQRSQSPLPLHNNISSINTSIHNAINSLKPKPLHLSSPSIPTTSPDAPYRLPSLNSSSNNINNQSDYWSAINPINSSGTNITNNNYNNNNNNYNNNNNNNNNNNNNNNNNNNNNNNNNNNNSNSNNNNNNNNNNNNINNNNSNSNNNMNSNNNNNNINNINNNNNNNNNNNNNNNNNNNNNNNNNNNNNSNSNNNNCNNNNNGGSNIHSLNNSSNSVNYNNNNNNNNNNINKDKKNKKKLSASTPIFGESNLGDIINNVIDEHQLNSNNNNNNNTPHFSFNNNSLKELKPLKRKASIRNSSGGVITNENGWTTIVNNNNNNNNNNNNNNNNNNNNNNNNNNNNNISSNLPIISGLLSLSKVDSTSVDKL</sequence>
<reference key="1">
    <citation type="journal article" date="2002" name="Nature">
        <title>Sequence and analysis of chromosome 2 of Dictyostelium discoideum.</title>
        <authorList>
            <person name="Gloeckner G."/>
            <person name="Eichinger L."/>
            <person name="Szafranski K."/>
            <person name="Pachebat J.A."/>
            <person name="Bankier A.T."/>
            <person name="Dear P.H."/>
            <person name="Lehmann R."/>
            <person name="Baumgart C."/>
            <person name="Parra G."/>
            <person name="Abril J.F."/>
            <person name="Guigo R."/>
            <person name="Kumpf K."/>
            <person name="Tunggal B."/>
            <person name="Cox E.C."/>
            <person name="Quail M.A."/>
            <person name="Platzer M."/>
            <person name="Rosenthal A."/>
            <person name="Noegel A.A."/>
        </authorList>
    </citation>
    <scope>NUCLEOTIDE SEQUENCE [LARGE SCALE GENOMIC DNA]</scope>
    <source>
        <strain>AX4</strain>
    </source>
</reference>
<reference key="2">
    <citation type="journal article" date="2005" name="Nature">
        <title>The genome of the social amoeba Dictyostelium discoideum.</title>
        <authorList>
            <person name="Eichinger L."/>
            <person name="Pachebat J.A."/>
            <person name="Gloeckner G."/>
            <person name="Rajandream M.A."/>
            <person name="Sucgang R."/>
            <person name="Berriman M."/>
            <person name="Song J."/>
            <person name="Olsen R."/>
            <person name="Szafranski K."/>
            <person name="Xu Q."/>
            <person name="Tunggal B."/>
            <person name="Kummerfeld S."/>
            <person name="Madera M."/>
            <person name="Konfortov B.A."/>
            <person name="Rivero F."/>
            <person name="Bankier A.T."/>
            <person name="Lehmann R."/>
            <person name="Hamlin N."/>
            <person name="Davies R."/>
            <person name="Gaudet P."/>
            <person name="Fey P."/>
            <person name="Pilcher K."/>
            <person name="Chen G."/>
            <person name="Saunders D."/>
            <person name="Sodergren E.J."/>
            <person name="Davis P."/>
            <person name="Kerhornou A."/>
            <person name="Nie X."/>
            <person name="Hall N."/>
            <person name="Anjard C."/>
            <person name="Hemphill L."/>
            <person name="Bason N."/>
            <person name="Farbrother P."/>
            <person name="Desany B."/>
            <person name="Just E."/>
            <person name="Morio T."/>
            <person name="Rost R."/>
            <person name="Churcher C.M."/>
            <person name="Cooper J."/>
            <person name="Haydock S."/>
            <person name="van Driessche N."/>
            <person name="Cronin A."/>
            <person name="Goodhead I."/>
            <person name="Muzny D.M."/>
            <person name="Mourier T."/>
            <person name="Pain A."/>
            <person name="Lu M."/>
            <person name="Harper D."/>
            <person name="Lindsay R."/>
            <person name="Hauser H."/>
            <person name="James K.D."/>
            <person name="Quiles M."/>
            <person name="Madan Babu M."/>
            <person name="Saito T."/>
            <person name="Buchrieser C."/>
            <person name="Wardroper A."/>
            <person name="Felder M."/>
            <person name="Thangavelu M."/>
            <person name="Johnson D."/>
            <person name="Knights A."/>
            <person name="Loulseged H."/>
            <person name="Mungall K.L."/>
            <person name="Oliver K."/>
            <person name="Price C."/>
            <person name="Quail M.A."/>
            <person name="Urushihara H."/>
            <person name="Hernandez J."/>
            <person name="Rabbinowitsch E."/>
            <person name="Steffen D."/>
            <person name="Sanders M."/>
            <person name="Ma J."/>
            <person name="Kohara Y."/>
            <person name="Sharp S."/>
            <person name="Simmonds M.N."/>
            <person name="Spiegler S."/>
            <person name="Tivey A."/>
            <person name="Sugano S."/>
            <person name="White B."/>
            <person name="Walker D."/>
            <person name="Woodward J.R."/>
            <person name="Winckler T."/>
            <person name="Tanaka Y."/>
            <person name="Shaulsky G."/>
            <person name="Schleicher M."/>
            <person name="Weinstock G.M."/>
            <person name="Rosenthal A."/>
            <person name="Cox E.C."/>
            <person name="Chisholm R.L."/>
            <person name="Gibbs R.A."/>
            <person name="Loomis W.F."/>
            <person name="Platzer M."/>
            <person name="Kay R.R."/>
            <person name="Williams J.G."/>
            <person name="Dear P.H."/>
            <person name="Noegel A.A."/>
            <person name="Barrell B.G."/>
            <person name="Kuspa A."/>
        </authorList>
    </citation>
    <scope>NUCLEOTIDE SEQUENCE [LARGE SCALE GENOMIC DNA]</scope>
    <source>
        <strain>AX4</strain>
    </source>
</reference>
<gene>
    <name type="ORF">DDB_G0277255</name>
</gene>
<accession>Q86K40</accession>
<accession>Q54ZV2</accession>